<keyword id="KW-0007">Acetylation</keyword>
<keyword id="KW-0167">Capsid protein</keyword>
<keyword id="KW-1185">Reference proteome</keyword>
<keyword id="KW-0688">Ribosomal frameshifting</keyword>
<keyword id="KW-1141">T=2 icosahedral capsid protein</keyword>
<keyword id="KW-0946">Virion</keyword>
<evidence type="ECO:0000250" key="1"/>
<evidence type="ECO:0000256" key="2">
    <source>
        <dbReference type="SAM" id="MobiDB-lite"/>
    </source>
</evidence>
<evidence type="ECO:0000305" key="3"/>
<proteinExistence type="inferred from homology"/>
<protein>
    <recommendedName>
        <fullName>Major capsid protein</fullName>
    </recommendedName>
    <alternativeName>
        <fullName>Gag protein</fullName>
    </alternativeName>
    <alternativeName>
        <fullName>Major coat protein</fullName>
    </alternativeName>
</protein>
<dbReference type="EMBL" id="L13218">
    <property type="protein sequence ID" value="AAB01578.1"/>
    <property type="molecule type" value="Genomic_RNA"/>
</dbReference>
<dbReference type="RefSeq" id="NP_619551.1">
    <property type="nucleotide sequence ID" value="NC_003555.1"/>
</dbReference>
<dbReference type="SMR" id="Q67652"/>
<dbReference type="KEGG" id="vg:940170"/>
<dbReference type="Proteomes" id="UP000000350">
    <property type="component" value="Segment"/>
</dbReference>
<dbReference type="GO" id="GO:0039616">
    <property type="term" value="C:T=2 icosahedral viral capsid"/>
    <property type="evidence" value="ECO:0007669"/>
    <property type="project" value="UniProtKB-KW"/>
</dbReference>
<dbReference type="GO" id="GO:0075523">
    <property type="term" value="P:viral translational frameshifting"/>
    <property type="evidence" value="ECO:0007669"/>
    <property type="project" value="UniProtKB-KW"/>
</dbReference>
<name>CAPSD_GLVWB</name>
<reference key="1">
    <citation type="journal article" date="1993" name="Proc. Natl. Acad. Sci. U.S.A.">
        <title>Giardiavirus double-stranded RNA genome encodes a capsid polypeptide and a gag-pol-like fusion protein by a translation frameshift.</title>
        <authorList>
            <person name="Wang A.L."/>
            <person name="Yang H.M."/>
            <person name="Shen K.A."/>
            <person name="Wang C.C."/>
        </authorList>
    </citation>
    <scope>NUCLEOTIDE SEQUENCE [GENOMIC RNA]</scope>
</reference>
<comment type="function">
    <text evidence="1">Capsid protein self-assembles to form an icosahedral capsid with a T=2 symmetry, 35 nm in diameter, and consisting of 60 capsid proteins asymmetric dimers. The capsid encapsulates the genomic dsRNA and the polymerase and remains intact following cell entry to protect the dsRNA from degradation and to prevent unfavorable antiviral responses in the host cell during all the replication cycle of the virus. Nascent transcripts are transcribed within the structural confines of the virion and are extruded into the cytoplasm (By similarity).</text>
</comment>
<comment type="function">
    <text evidence="1">Binds and removes 5' cap structures from cellular mRNA.</text>
</comment>
<comment type="subcellular location">
    <subcellularLocation>
        <location evidence="3">Virion</location>
    </subcellularLocation>
</comment>
<comment type="alternative products">
    <event type="ribosomal frameshifting"/>
    <isoform>
        <id>Q67652-1</id>
        <name>Major capsid protein</name>
        <name>Gag protein</name>
        <sequence type="displayed"/>
    </isoform>
    <isoform>
        <id>Q67653-1</id>
        <name>RNA-directed RNA polymerase</name>
        <name>Pol protein</name>
        <sequence type="external"/>
    </isoform>
</comment>
<comment type="PTM">
    <text evidence="1">Acetylation is necessary for viral assembly.</text>
</comment>
<comment type="miscellaneous">
    <molecule>Isoform Major capsid protein</molecule>
    <text>Produced by conventional translation.</text>
</comment>
<comment type="similarity">
    <text evidence="3">Belongs to the totivirus major capsid protein family.</text>
</comment>
<accession>Q67652</accession>
<organism>
    <name type="scientific">Giardia lamblia virus (isolate Wang)</name>
    <name type="common">GLV</name>
    <dbReference type="NCBI Taxonomy" id="649893"/>
    <lineage>
        <taxon>Viruses</taxon>
        <taxon>Riboviria</taxon>
        <taxon>Orthornavirae</taxon>
        <taxon>Duplornaviricota</taxon>
        <taxon>Chrymotiviricetes</taxon>
        <taxon>Ghabrivirales</taxon>
        <taxon>Totiviridae</taxon>
        <taxon>Giardiavirus</taxon>
        <taxon>Giardia lamblia virus</taxon>
    </lineage>
</organism>
<organismHost>
    <name type="scientific">Giardia intestinalis</name>
    <name type="common">Giardia lamblia</name>
    <dbReference type="NCBI Taxonomy" id="5741"/>
</organismHost>
<gene>
    <name type="primary">gag</name>
</gene>
<feature type="chain" id="PRO_0000404513" description="Major capsid protein">
    <location>
        <begin position="1"/>
        <end position="886"/>
    </location>
</feature>
<feature type="region of interest" description="Disordered" evidence="2">
    <location>
        <begin position="42"/>
        <end position="61"/>
    </location>
</feature>
<feature type="compositionally biased region" description="Basic and acidic residues" evidence="2">
    <location>
        <begin position="44"/>
        <end position="56"/>
    </location>
</feature>
<feature type="modified residue" description="N-acetylmethionine; by host" evidence="1">
    <location>
        <position position="1"/>
    </location>
</feature>
<sequence>MVWGTGYGNPSPLNPYGFASLHRGGLNPLILAPENITFDTLNTHNDHEETHGESPEVPKASIAPAGRQNVPVLQQNQENEDNHALGGSEDAKDEREIRFSAIKTLYNYYSEGPSTPIMPHLVNRLRGLDALAKIDATLTKVDMNAAYIFALRPTFPYSYGYKQRFSNRRLTTSALCYARTGLSSFLTVDKTYTSNSPLKGGSRGWPIFNVDVSSHVAEPHMRTLSPIGLEVFNLATSQFSKTLLTASSKVFTQSLYTADILSIFGEVFLPHVMQPVSNYTPILVRALLALIHILGPGSGNCSLSSSIFESSIPQFLTVSHSTNMSNRTRYCLHTRSAYKDMFRNGIPPQSTLPPTLAPEGSSARVLIPEALVTSPMFPWLLILVSSGPQFFLYSKDASINTVDIGSRGRITSPIPDVAKLDLHRLWNLFRFDGYRYIDVVIVGADRDYVWPYQNGVYVHGGKGPNGTGNYGNADVHDGIGTIFSSFNNNVNVQTSDLMLGLLTLWNHITTTYATEEEVTMAIKIAAAFALVYPVQPIVYSGCPKAFQRHTSYYQPSSENCYATDTAEVKSVWDTVELSVQVNNAMVLGMTLPFGQPTLSSAQWYNNIDKAEISMFKVGNLPLQNLDYLSLDMMEFYAPTTGQLYDIRSDNLILSAHRTVNLGIGYTALADFFAYLASVPAQSFYHDRMVTSPISKQTYSVYERFIERFIDDFVGWDRCDLFNLDTLLGAKHIAGVASSPIPWHCSLQRCPLPIIMHYTGLTFGQEHITVRDVAGVEGLQQIVMRDFQGRIVVERLGTAAPSRIAVKLDWSRLSAWYSDTTCAIPLSDRVMEIVNYAAIWDPTQERHAQVSCTHTLAPISFRALTCLSLYSIRVSTLHHLMTTRAKL</sequence>